<organism>
    <name type="scientific">Methanococcus voltae</name>
    <dbReference type="NCBI Taxonomy" id="2188"/>
    <lineage>
        <taxon>Archaea</taxon>
        <taxon>Methanobacteriati</taxon>
        <taxon>Methanobacteriota</taxon>
        <taxon>Methanomada group</taxon>
        <taxon>Methanococci</taxon>
        <taxon>Methanococcales</taxon>
        <taxon>Methanococcaceae</taxon>
        <taxon>Methanococcus</taxon>
    </lineage>
</organism>
<proteinExistence type="inferred from homology"/>
<accession>Q69GZ5</accession>
<evidence type="ECO:0000255" key="1">
    <source>
        <dbReference type="HAMAP-Rule" id="MF_01894"/>
    </source>
</evidence>
<evidence type="ECO:0000269" key="2">
    <source>
    </source>
</evidence>
<sequence length="1199" mass="137830">MISISEIHLKNFKSFKNTKLKIPDGFTAILGPNGSGKSNTIDGICFVLGKTSAKSLRAGKFNQLITYHNGKRADYAEVTLFFDNINREIPIDSDKVGICRKVKLNGDNNYYVVWYEVEKQNTKINTESSQKKTSKASKVEKRRRMKKNEVLDLLSKISLIADGPNIILQGDLLRIIDTSPNERRKILDEVSGVAEFDEKSEKAKKELSQAREYIEKIDIRINEVRANLEKLKKEKEDAEKYTVYNKKLKVTKYILTSKKVEFLKMVLDETKDEIEALKETKNCYIQDISNIDSEIIGLKVKINELVNELNEKGSEEVMELHKSIKELEVNLNNDKNALENAIDDLKHTLKMEESKNNDLNETKEKINNIRIDTLKKEAEAKVLIKEIEKLNEERQNLEKKVEQSESQVKALKNQESKLSERINDTQKELYGLKNELNQLENTLNNRTFDYQKNNETIENLTNQIAEFSDLEDTKKLYKELEDIAVELEFSKKKLQEKITERNDSQSKLDNLHSEYVKENARIKTLKDMENFSLDRAVKGVLDAKLPGVVDIAGNLAKTKGEYKTAIEVAGGARLNHIVVKKMDDGSRAINYLKQKRLGRATFLPMDRIKGMDAKDISDTGIIGKAIDLVEFDIKYTNVFKFIFGNTHIVDNLENAKKLSLKYKARFVTLEGEVIEPSGAMVGGNIRRNSAIKVDIDMKKLTNLSEDIKELEQILSNVKDEIERLNNKINTCSTRKLELDNRLKIARDQEFKKEEITKSNNLKIKELNMLNSKIDDEISELTDEKEILSQKVQNLDNKLSEVMGQRERIVNEIKSYENSELSKRIKEIDHKIRENESSKNTLENEIKKGAILVKEVLIPKISELNSNIKSLADKKNMFKNSVEIYKSNIESNSSILSDKRGKYEELTKGLKDLTDKKECYELEIENLQNNKEELREKATDIDNQVNVINVDRAKYETRLEEEERKLYLCDTLENIEDISDEMIEETYSLEIDDLERNQALLESSIKKLEPVNMRAIEDYDFINERYEELFGKRKEYEQEEGKYLQLISEVQKRKKETFMKTYDRVAENYEQIYGEIGGNGKLSLENEEDPFSGGLLIDASPMNKQLQNLDVMSGGEKSLTALAFLFAIQRLNPSPFYVLDEVDAALDTKNASLIGDMISNASKESQFIVISHREQMISKSNVMYGVCMENGLSKIVSVKL</sequence>
<keyword id="KW-0067">ATP-binding</keyword>
<keyword id="KW-0175">Coiled coil</keyword>
<keyword id="KW-0963">Cytoplasm</keyword>
<keyword id="KW-0238">DNA-binding</keyword>
<keyword id="KW-0547">Nucleotide-binding</keyword>
<feature type="chain" id="PRO_0000409286" description="Chromosome partition protein Smc">
    <location>
        <begin position="1"/>
        <end position="1199"/>
    </location>
</feature>
<feature type="domain" description="SMC hinge">
    <location>
        <begin position="546"/>
        <end position="658"/>
    </location>
</feature>
<feature type="coiled-coil region" evidence="1">
    <location>
        <begin position="192"/>
        <end position="528"/>
    </location>
</feature>
<feature type="coiled-coil region" evidence="1">
    <location>
        <begin position="691"/>
        <end position="1051"/>
    </location>
</feature>
<feature type="binding site" evidence="1">
    <location>
        <begin position="32"/>
        <end position="39"/>
    </location>
    <ligand>
        <name>ATP</name>
        <dbReference type="ChEBI" id="CHEBI:30616"/>
    </ligand>
</feature>
<comment type="function">
    <text evidence="1 2">Required for chromosome condensation and partitioning.</text>
</comment>
<comment type="subunit">
    <text evidence="1">Homodimer.</text>
</comment>
<comment type="subcellular location">
    <subcellularLocation>
        <location evidence="1">Cytoplasm</location>
    </subcellularLocation>
</comment>
<comment type="domain">
    <text evidence="1">Contains large globular domains required for ATP hydrolysis at each terminus and a third globular domain forming a flexible SMC hinge near the middle of the molecule. These domains are separated by coiled-coil structures.</text>
</comment>
<comment type="disruption phenotype">
    <text evidence="2">Mutants show a high rate of anucleate cell production and a subset of cells that is extremely enlarged with irregular morphology.</text>
</comment>
<comment type="similarity">
    <text evidence="1">Belongs to the SMC family.</text>
</comment>
<dbReference type="EMBL" id="AY288521">
    <property type="protein sequence ID" value="AAQ22369.1"/>
    <property type="molecule type" value="Genomic_DNA"/>
</dbReference>
<dbReference type="SMR" id="Q69GZ5"/>
<dbReference type="GO" id="GO:0005694">
    <property type="term" value="C:chromosome"/>
    <property type="evidence" value="ECO:0007669"/>
    <property type="project" value="InterPro"/>
</dbReference>
<dbReference type="GO" id="GO:0005737">
    <property type="term" value="C:cytoplasm"/>
    <property type="evidence" value="ECO:0007669"/>
    <property type="project" value="UniProtKB-SubCell"/>
</dbReference>
<dbReference type="GO" id="GO:0005524">
    <property type="term" value="F:ATP binding"/>
    <property type="evidence" value="ECO:0007669"/>
    <property type="project" value="UniProtKB-UniRule"/>
</dbReference>
<dbReference type="GO" id="GO:0016887">
    <property type="term" value="F:ATP hydrolysis activity"/>
    <property type="evidence" value="ECO:0007669"/>
    <property type="project" value="InterPro"/>
</dbReference>
<dbReference type="GO" id="GO:0003677">
    <property type="term" value="F:DNA binding"/>
    <property type="evidence" value="ECO:0007669"/>
    <property type="project" value="UniProtKB-UniRule"/>
</dbReference>
<dbReference type="GO" id="GO:0030261">
    <property type="term" value="P:chromosome condensation"/>
    <property type="evidence" value="ECO:0007669"/>
    <property type="project" value="InterPro"/>
</dbReference>
<dbReference type="GO" id="GO:0007059">
    <property type="term" value="P:chromosome segregation"/>
    <property type="evidence" value="ECO:0007669"/>
    <property type="project" value="UniProtKB-UniRule"/>
</dbReference>
<dbReference type="GO" id="GO:0006260">
    <property type="term" value="P:DNA replication"/>
    <property type="evidence" value="ECO:0007669"/>
    <property type="project" value="UniProtKB-UniRule"/>
</dbReference>
<dbReference type="GO" id="GO:0007062">
    <property type="term" value="P:sister chromatid cohesion"/>
    <property type="evidence" value="ECO:0007669"/>
    <property type="project" value="InterPro"/>
</dbReference>
<dbReference type="Gene3D" id="1.20.1060.20">
    <property type="match status" value="1"/>
</dbReference>
<dbReference type="Gene3D" id="3.30.70.1620">
    <property type="match status" value="1"/>
</dbReference>
<dbReference type="Gene3D" id="6.10.250.3110">
    <property type="match status" value="1"/>
</dbReference>
<dbReference type="Gene3D" id="3.40.50.300">
    <property type="entry name" value="P-loop containing nucleotide triphosphate hydrolases"/>
    <property type="match status" value="2"/>
</dbReference>
<dbReference type="HAMAP" id="MF_01894">
    <property type="entry name" value="Smc_prok"/>
    <property type="match status" value="1"/>
</dbReference>
<dbReference type="InterPro" id="IPR027417">
    <property type="entry name" value="P-loop_NTPase"/>
</dbReference>
<dbReference type="InterPro" id="IPR003395">
    <property type="entry name" value="RecF/RecN/SMC_N"/>
</dbReference>
<dbReference type="InterPro" id="IPR024704">
    <property type="entry name" value="SMC"/>
</dbReference>
<dbReference type="InterPro" id="IPR010935">
    <property type="entry name" value="SMC_hinge"/>
</dbReference>
<dbReference type="InterPro" id="IPR036277">
    <property type="entry name" value="SMC_hinge_sf"/>
</dbReference>
<dbReference type="InterPro" id="IPR011890">
    <property type="entry name" value="SMC_prok"/>
</dbReference>
<dbReference type="NCBIfam" id="TIGR02169">
    <property type="entry name" value="SMC_prok_A"/>
    <property type="match status" value="1"/>
</dbReference>
<dbReference type="PANTHER" id="PTHR43977">
    <property type="entry name" value="STRUCTURAL MAINTENANCE OF CHROMOSOMES PROTEIN 3"/>
    <property type="match status" value="1"/>
</dbReference>
<dbReference type="Pfam" id="PF06470">
    <property type="entry name" value="SMC_hinge"/>
    <property type="match status" value="1"/>
</dbReference>
<dbReference type="Pfam" id="PF02463">
    <property type="entry name" value="SMC_N"/>
    <property type="match status" value="2"/>
</dbReference>
<dbReference type="PIRSF" id="PIRSF005719">
    <property type="entry name" value="SMC"/>
    <property type="match status" value="1"/>
</dbReference>
<dbReference type="SMART" id="SM00968">
    <property type="entry name" value="SMC_hinge"/>
    <property type="match status" value="1"/>
</dbReference>
<dbReference type="SUPFAM" id="SSF52540">
    <property type="entry name" value="P-loop containing nucleoside triphosphate hydrolases"/>
    <property type="match status" value="1"/>
</dbReference>
<dbReference type="SUPFAM" id="SSF75553">
    <property type="entry name" value="Smc hinge domain"/>
    <property type="match status" value="1"/>
</dbReference>
<name>SMC_METVO</name>
<reference key="1">
    <citation type="submission" date="2003-10" db="EMBL/GenBank/DDBJ databases">
        <title>Chromosomal segregation protein SMC.</title>
        <authorList>
            <person name="Feldman R."/>
            <person name="Overbeek R."/>
            <person name="Whitman W."/>
        </authorList>
    </citation>
    <scope>NUCLEOTIDE SEQUENCE [GENOMIC DNA]</scope>
    <source>
        <strain>ATCC 33273 / DSM 1537 / NBRC 100457 / OCM 70 / PS</strain>
    </source>
</reference>
<reference key="2">
    <citation type="journal article" date="2004" name="Mol. Microbiol.">
        <title>Anucleate and titan cell phenotypes caused by insertional inactivation of the structural maintenance of chromosomes (smc) gene in the archaeon Methanococcus voltae.</title>
        <authorList>
            <person name="Long S.W."/>
            <person name="Faguy D.M."/>
        </authorList>
    </citation>
    <scope>FUNCTION</scope>
    <scope>DISRUPTION PHENOTYPE</scope>
    <source>
        <strain>ATCC 33273 / DSM 1537 / NBRC 100457 / OCM 70 / PS</strain>
    </source>
</reference>
<gene>
    <name evidence="1" type="primary">smc</name>
</gene>
<protein>
    <recommendedName>
        <fullName evidence="1">Chromosome partition protein Smc</fullName>
    </recommendedName>
</protein>